<accession>B7MYE6</accession>
<proteinExistence type="inferred from homology"/>
<dbReference type="EMBL" id="CU928162">
    <property type="protein sequence ID" value="CAR09112.2"/>
    <property type="molecule type" value="Genomic_DNA"/>
</dbReference>
<dbReference type="RefSeq" id="WP_001350310.1">
    <property type="nucleotide sequence ID" value="NC_011745.1"/>
</dbReference>
<dbReference type="SMR" id="B7MYE6"/>
<dbReference type="KEGG" id="ecq:ECED1_2942"/>
<dbReference type="HOGENOM" id="CLU_016077_6_2_6"/>
<dbReference type="Proteomes" id="UP000000748">
    <property type="component" value="Chromosome"/>
</dbReference>
<dbReference type="GO" id="GO:0005525">
    <property type="term" value="F:GTP binding"/>
    <property type="evidence" value="ECO:0007669"/>
    <property type="project" value="UniProtKB-UniRule"/>
</dbReference>
<dbReference type="GO" id="GO:0043022">
    <property type="term" value="F:ribosome binding"/>
    <property type="evidence" value="ECO:0007669"/>
    <property type="project" value="TreeGrafter"/>
</dbReference>
<dbReference type="GO" id="GO:0042254">
    <property type="term" value="P:ribosome biogenesis"/>
    <property type="evidence" value="ECO:0007669"/>
    <property type="project" value="UniProtKB-KW"/>
</dbReference>
<dbReference type="CDD" id="cd01894">
    <property type="entry name" value="EngA1"/>
    <property type="match status" value="1"/>
</dbReference>
<dbReference type="CDD" id="cd01895">
    <property type="entry name" value="EngA2"/>
    <property type="match status" value="1"/>
</dbReference>
<dbReference type="FunFam" id="3.30.300.20:FF:000004">
    <property type="entry name" value="GTPase Der"/>
    <property type="match status" value="1"/>
</dbReference>
<dbReference type="FunFam" id="3.40.50.300:FF:000040">
    <property type="entry name" value="GTPase Der"/>
    <property type="match status" value="1"/>
</dbReference>
<dbReference type="FunFam" id="3.40.50.300:FF:000057">
    <property type="entry name" value="GTPase Der"/>
    <property type="match status" value="1"/>
</dbReference>
<dbReference type="Gene3D" id="3.30.300.20">
    <property type="match status" value="1"/>
</dbReference>
<dbReference type="Gene3D" id="3.40.50.300">
    <property type="entry name" value="P-loop containing nucleotide triphosphate hydrolases"/>
    <property type="match status" value="2"/>
</dbReference>
<dbReference type="HAMAP" id="MF_00195">
    <property type="entry name" value="GTPase_Der"/>
    <property type="match status" value="1"/>
</dbReference>
<dbReference type="InterPro" id="IPR031166">
    <property type="entry name" value="G_ENGA"/>
</dbReference>
<dbReference type="InterPro" id="IPR006073">
    <property type="entry name" value="GTP-bd"/>
</dbReference>
<dbReference type="InterPro" id="IPR016484">
    <property type="entry name" value="GTPase_Der"/>
</dbReference>
<dbReference type="InterPro" id="IPR032859">
    <property type="entry name" value="KH_dom-like"/>
</dbReference>
<dbReference type="InterPro" id="IPR015946">
    <property type="entry name" value="KH_dom-like_a/b"/>
</dbReference>
<dbReference type="InterPro" id="IPR027417">
    <property type="entry name" value="P-loop_NTPase"/>
</dbReference>
<dbReference type="InterPro" id="IPR005225">
    <property type="entry name" value="Small_GTP-bd"/>
</dbReference>
<dbReference type="NCBIfam" id="TIGR03594">
    <property type="entry name" value="GTPase_EngA"/>
    <property type="match status" value="1"/>
</dbReference>
<dbReference type="NCBIfam" id="TIGR00231">
    <property type="entry name" value="small_GTP"/>
    <property type="match status" value="2"/>
</dbReference>
<dbReference type="PANTHER" id="PTHR43834">
    <property type="entry name" value="GTPASE DER"/>
    <property type="match status" value="1"/>
</dbReference>
<dbReference type="PANTHER" id="PTHR43834:SF6">
    <property type="entry name" value="GTPASE DER"/>
    <property type="match status" value="1"/>
</dbReference>
<dbReference type="Pfam" id="PF14714">
    <property type="entry name" value="KH_dom-like"/>
    <property type="match status" value="1"/>
</dbReference>
<dbReference type="Pfam" id="PF01926">
    <property type="entry name" value="MMR_HSR1"/>
    <property type="match status" value="2"/>
</dbReference>
<dbReference type="PIRSF" id="PIRSF006485">
    <property type="entry name" value="GTP-binding_EngA"/>
    <property type="match status" value="1"/>
</dbReference>
<dbReference type="PRINTS" id="PR00326">
    <property type="entry name" value="GTP1OBG"/>
</dbReference>
<dbReference type="SUPFAM" id="SSF52540">
    <property type="entry name" value="P-loop containing nucleoside triphosphate hydrolases"/>
    <property type="match status" value="2"/>
</dbReference>
<dbReference type="PROSITE" id="PS51712">
    <property type="entry name" value="G_ENGA"/>
    <property type="match status" value="2"/>
</dbReference>
<reference key="1">
    <citation type="journal article" date="2009" name="PLoS Genet.">
        <title>Organised genome dynamics in the Escherichia coli species results in highly diverse adaptive paths.</title>
        <authorList>
            <person name="Touchon M."/>
            <person name="Hoede C."/>
            <person name="Tenaillon O."/>
            <person name="Barbe V."/>
            <person name="Baeriswyl S."/>
            <person name="Bidet P."/>
            <person name="Bingen E."/>
            <person name="Bonacorsi S."/>
            <person name="Bouchier C."/>
            <person name="Bouvet O."/>
            <person name="Calteau A."/>
            <person name="Chiapello H."/>
            <person name="Clermont O."/>
            <person name="Cruveiller S."/>
            <person name="Danchin A."/>
            <person name="Diard M."/>
            <person name="Dossat C."/>
            <person name="Karoui M.E."/>
            <person name="Frapy E."/>
            <person name="Garry L."/>
            <person name="Ghigo J.M."/>
            <person name="Gilles A.M."/>
            <person name="Johnson J."/>
            <person name="Le Bouguenec C."/>
            <person name="Lescat M."/>
            <person name="Mangenot S."/>
            <person name="Martinez-Jehanne V."/>
            <person name="Matic I."/>
            <person name="Nassif X."/>
            <person name="Oztas S."/>
            <person name="Petit M.A."/>
            <person name="Pichon C."/>
            <person name="Rouy Z."/>
            <person name="Ruf C.S."/>
            <person name="Schneider D."/>
            <person name="Tourret J."/>
            <person name="Vacherie B."/>
            <person name="Vallenet D."/>
            <person name="Medigue C."/>
            <person name="Rocha E.P.C."/>
            <person name="Denamur E."/>
        </authorList>
    </citation>
    <scope>NUCLEOTIDE SEQUENCE [LARGE SCALE GENOMIC DNA]</scope>
    <source>
        <strain>ED1a</strain>
    </source>
</reference>
<organism>
    <name type="scientific">Escherichia coli O81 (strain ED1a)</name>
    <dbReference type="NCBI Taxonomy" id="585397"/>
    <lineage>
        <taxon>Bacteria</taxon>
        <taxon>Pseudomonadati</taxon>
        <taxon>Pseudomonadota</taxon>
        <taxon>Gammaproteobacteria</taxon>
        <taxon>Enterobacterales</taxon>
        <taxon>Enterobacteriaceae</taxon>
        <taxon>Escherichia</taxon>
    </lineage>
</organism>
<keyword id="KW-0342">GTP-binding</keyword>
<keyword id="KW-0547">Nucleotide-binding</keyword>
<keyword id="KW-0677">Repeat</keyword>
<keyword id="KW-0690">Ribosome biogenesis</keyword>
<protein>
    <recommendedName>
        <fullName evidence="1">GTPase Der</fullName>
    </recommendedName>
    <alternativeName>
        <fullName evidence="1">GTP-binding protein EngA</fullName>
    </alternativeName>
</protein>
<name>DER_ECO81</name>
<comment type="function">
    <text evidence="1">GTPase that plays an essential role in the late steps of ribosome biogenesis.</text>
</comment>
<comment type="subunit">
    <text evidence="1">Associates with the 50S ribosomal subunit.</text>
</comment>
<comment type="similarity">
    <text evidence="1">Belongs to the TRAFAC class TrmE-Era-EngA-EngB-Septin-like GTPase superfamily. EngA (Der) GTPase family.</text>
</comment>
<feature type="chain" id="PRO_1000124358" description="GTPase Der">
    <location>
        <begin position="1"/>
        <end position="490"/>
    </location>
</feature>
<feature type="domain" description="EngA-type G 1">
    <location>
        <begin position="3"/>
        <end position="166"/>
    </location>
</feature>
<feature type="domain" description="EngA-type G 2">
    <location>
        <begin position="203"/>
        <end position="376"/>
    </location>
</feature>
<feature type="domain" description="KH-like" evidence="1">
    <location>
        <begin position="377"/>
        <end position="461"/>
    </location>
</feature>
<feature type="binding site" evidence="1">
    <location>
        <begin position="9"/>
        <end position="16"/>
    </location>
    <ligand>
        <name>GTP</name>
        <dbReference type="ChEBI" id="CHEBI:37565"/>
        <label>1</label>
    </ligand>
</feature>
<feature type="binding site" evidence="1">
    <location>
        <begin position="56"/>
        <end position="60"/>
    </location>
    <ligand>
        <name>GTP</name>
        <dbReference type="ChEBI" id="CHEBI:37565"/>
        <label>1</label>
    </ligand>
</feature>
<feature type="binding site" evidence="1">
    <location>
        <begin position="118"/>
        <end position="121"/>
    </location>
    <ligand>
        <name>GTP</name>
        <dbReference type="ChEBI" id="CHEBI:37565"/>
        <label>1</label>
    </ligand>
</feature>
<feature type="binding site" evidence="1">
    <location>
        <begin position="209"/>
        <end position="216"/>
    </location>
    <ligand>
        <name>GTP</name>
        <dbReference type="ChEBI" id="CHEBI:37565"/>
        <label>2</label>
    </ligand>
</feature>
<feature type="binding site" evidence="1">
    <location>
        <begin position="256"/>
        <end position="260"/>
    </location>
    <ligand>
        <name>GTP</name>
        <dbReference type="ChEBI" id="CHEBI:37565"/>
        <label>2</label>
    </ligand>
</feature>
<feature type="binding site" evidence="1">
    <location>
        <begin position="321"/>
        <end position="324"/>
    </location>
    <ligand>
        <name>GTP</name>
        <dbReference type="ChEBI" id="CHEBI:37565"/>
        <label>2</label>
    </ligand>
</feature>
<evidence type="ECO:0000255" key="1">
    <source>
        <dbReference type="HAMAP-Rule" id="MF_00195"/>
    </source>
</evidence>
<gene>
    <name evidence="1" type="primary">der</name>
    <name type="synonym">engA</name>
    <name type="ordered locus">ECED1_2942</name>
</gene>
<sequence>MVPVVALVGRPNVGKSTLFNRLTRTRDALVADFPGLTRDRKYGRAEIEGREFICIDTGGIDGTEDGVETRMAEQSLLAIEEADVVLFMVDARSGLMPADEAIAKHLRSREKPTFLVANKTDGLDPDQAVVDFYALGLGEIYPIAASHGRGVLSLLEHVLLPWMEDLAPQEEVDEDAEYWAQFEAEENGEEEEEDDFDPQSLPIKLAIVGRPNVGKSTLTNRILGEERVVVYDMPGTTRDSIYIPMERDGREYVLIDTAGVRKRGKITDAVEKFSVIKTLQAIEDANVVMLVIDAREGISDQDLSLLGFILNSGRSLVIVVNKWDGLSQEVKEQVKETLDFRLGFIDFARVHFISALHGSGVGNLFESVREAYDSSTRRVGTSMLTRIMTMAVEDHQPPLVRGRRVKLKYAHAGGYNPPIVVIHGNQVKDLPDSYKRYLMNYFRKSLDVMGSPIRIQFKEGENPYANKRNTLTPTQMRKRKRLMKHIKKSK</sequence>